<dbReference type="EMBL" id="CP000230">
    <property type="protein sequence ID" value="ABC24540.1"/>
    <property type="molecule type" value="Genomic_DNA"/>
</dbReference>
<dbReference type="RefSeq" id="WP_011391493.1">
    <property type="nucleotide sequence ID" value="NC_007643.1"/>
</dbReference>
<dbReference type="RefSeq" id="YP_428827.1">
    <property type="nucleotide sequence ID" value="NC_007643.1"/>
</dbReference>
<dbReference type="SMR" id="Q2RMV5"/>
<dbReference type="STRING" id="269796.Rru_A3746"/>
<dbReference type="EnsemblBacteria" id="ABC24540">
    <property type="protein sequence ID" value="ABC24540"/>
    <property type="gene ID" value="Rru_A3746"/>
</dbReference>
<dbReference type="KEGG" id="rru:Rru_A3746"/>
<dbReference type="PATRIC" id="fig|269796.9.peg.3870"/>
<dbReference type="eggNOG" id="COG1825">
    <property type="taxonomic scope" value="Bacteria"/>
</dbReference>
<dbReference type="HOGENOM" id="CLU_075939_0_0_5"/>
<dbReference type="PhylomeDB" id="Q2RMV5"/>
<dbReference type="Proteomes" id="UP000001929">
    <property type="component" value="Chromosome"/>
</dbReference>
<dbReference type="GO" id="GO:0022625">
    <property type="term" value="C:cytosolic large ribosomal subunit"/>
    <property type="evidence" value="ECO:0007669"/>
    <property type="project" value="TreeGrafter"/>
</dbReference>
<dbReference type="GO" id="GO:0008097">
    <property type="term" value="F:5S rRNA binding"/>
    <property type="evidence" value="ECO:0007669"/>
    <property type="project" value="InterPro"/>
</dbReference>
<dbReference type="GO" id="GO:0003735">
    <property type="term" value="F:structural constituent of ribosome"/>
    <property type="evidence" value="ECO:0007669"/>
    <property type="project" value="InterPro"/>
</dbReference>
<dbReference type="GO" id="GO:0006412">
    <property type="term" value="P:translation"/>
    <property type="evidence" value="ECO:0007669"/>
    <property type="project" value="UniProtKB-UniRule"/>
</dbReference>
<dbReference type="CDD" id="cd00495">
    <property type="entry name" value="Ribosomal_L25_TL5_CTC"/>
    <property type="match status" value="1"/>
</dbReference>
<dbReference type="Gene3D" id="2.170.120.20">
    <property type="entry name" value="Ribosomal protein L25, beta domain"/>
    <property type="match status" value="1"/>
</dbReference>
<dbReference type="Gene3D" id="2.40.240.10">
    <property type="entry name" value="Ribosomal Protein L25, Chain P"/>
    <property type="match status" value="1"/>
</dbReference>
<dbReference type="HAMAP" id="MF_01334">
    <property type="entry name" value="Ribosomal_bL25_CTC"/>
    <property type="match status" value="1"/>
</dbReference>
<dbReference type="InterPro" id="IPR020056">
    <property type="entry name" value="Rbsml_bL25/Gln-tRNA_synth_N"/>
</dbReference>
<dbReference type="InterPro" id="IPR011035">
    <property type="entry name" value="Ribosomal_bL25/Gln-tRNA_synth"/>
</dbReference>
<dbReference type="InterPro" id="IPR020057">
    <property type="entry name" value="Ribosomal_bL25_b-dom"/>
</dbReference>
<dbReference type="InterPro" id="IPR037121">
    <property type="entry name" value="Ribosomal_bL25_C"/>
</dbReference>
<dbReference type="InterPro" id="IPR001021">
    <property type="entry name" value="Ribosomal_bL25_long"/>
</dbReference>
<dbReference type="InterPro" id="IPR029751">
    <property type="entry name" value="Ribosomal_L25_dom"/>
</dbReference>
<dbReference type="InterPro" id="IPR020930">
    <property type="entry name" value="Ribosomal_uL5_bac-type"/>
</dbReference>
<dbReference type="NCBIfam" id="TIGR00731">
    <property type="entry name" value="bL25_bact_ctc"/>
    <property type="match status" value="1"/>
</dbReference>
<dbReference type="NCBIfam" id="NF004128">
    <property type="entry name" value="PRK05618.1-2"/>
    <property type="match status" value="1"/>
</dbReference>
<dbReference type="NCBIfam" id="NF004612">
    <property type="entry name" value="PRK05943.1"/>
    <property type="match status" value="1"/>
</dbReference>
<dbReference type="PANTHER" id="PTHR33284">
    <property type="entry name" value="RIBOSOMAL PROTEIN L25/GLN-TRNA SYNTHETASE, ANTI-CODON-BINDING DOMAIN-CONTAINING PROTEIN"/>
    <property type="match status" value="1"/>
</dbReference>
<dbReference type="PANTHER" id="PTHR33284:SF1">
    <property type="entry name" value="RIBOSOMAL PROTEIN L25_GLN-TRNA SYNTHETASE, ANTI-CODON-BINDING DOMAIN-CONTAINING PROTEIN"/>
    <property type="match status" value="1"/>
</dbReference>
<dbReference type="Pfam" id="PF01386">
    <property type="entry name" value="Ribosomal_L25p"/>
    <property type="match status" value="1"/>
</dbReference>
<dbReference type="Pfam" id="PF14693">
    <property type="entry name" value="Ribosomal_TL5_C"/>
    <property type="match status" value="1"/>
</dbReference>
<dbReference type="SUPFAM" id="SSF50715">
    <property type="entry name" value="Ribosomal protein L25-like"/>
    <property type="match status" value="1"/>
</dbReference>
<keyword id="KW-1185">Reference proteome</keyword>
<keyword id="KW-0687">Ribonucleoprotein</keyword>
<keyword id="KW-0689">Ribosomal protein</keyword>
<keyword id="KW-0694">RNA-binding</keyword>
<keyword id="KW-0699">rRNA-binding</keyword>
<comment type="function">
    <text evidence="1">This is one of the proteins that binds to the 5S RNA in the ribosome where it forms part of the central protuberance.</text>
</comment>
<comment type="subunit">
    <text evidence="1">Part of the 50S ribosomal subunit; part of the 5S rRNA/L5/L18/L25 subcomplex. Contacts the 5S rRNA. Binds to the 5S rRNA independently of L5 and L18.</text>
</comment>
<comment type="similarity">
    <text evidence="1">Belongs to the bacterial ribosomal protein bL25 family. CTC subfamily.</text>
</comment>
<name>RL25_RHORT</name>
<proteinExistence type="inferred from homology"/>
<reference key="1">
    <citation type="journal article" date="2011" name="Stand. Genomic Sci.">
        <title>Complete genome sequence of Rhodospirillum rubrum type strain (S1).</title>
        <authorList>
            <person name="Munk A.C."/>
            <person name="Copeland A."/>
            <person name="Lucas S."/>
            <person name="Lapidus A."/>
            <person name="Del Rio T.G."/>
            <person name="Barry K."/>
            <person name="Detter J.C."/>
            <person name="Hammon N."/>
            <person name="Israni S."/>
            <person name="Pitluck S."/>
            <person name="Brettin T."/>
            <person name="Bruce D."/>
            <person name="Han C."/>
            <person name="Tapia R."/>
            <person name="Gilna P."/>
            <person name="Schmutz J."/>
            <person name="Larimer F."/>
            <person name="Land M."/>
            <person name="Kyrpides N.C."/>
            <person name="Mavromatis K."/>
            <person name="Richardson P."/>
            <person name="Rohde M."/>
            <person name="Goeker M."/>
            <person name="Klenk H.P."/>
            <person name="Zhang Y."/>
            <person name="Roberts G.P."/>
            <person name="Reslewic S."/>
            <person name="Schwartz D.C."/>
        </authorList>
    </citation>
    <scope>NUCLEOTIDE SEQUENCE [LARGE SCALE GENOMIC DNA]</scope>
    <source>
        <strain>ATCC 11170 / ATH 1.1.1 / DSM 467 / LMG 4362 / NCIMB 8255 / S1</strain>
    </source>
</reference>
<accession>Q2RMV5</accession>
<sequence length="210" mass="22282">MSDIGTLSAKGRDRAGKGAARATRREGQVPAVIYGGRQDPVLLSLAPRLIHTEMRKAGFSSRLFDLTVEGGETHRVMVQDVQFHPVTDMPIHVDFLRIGKDTEVTVAIPVHFINETASPGLKRGGVLNVVRHEIEVHGRPDALPDFFEVDLTGAEVGDSIHVGVVKIPEGVRPVIAERDFTICTIAAPSGLKSEEAAAGEAAAAAATPAA</sequence>
<protein>
    <recommendedName>
        <fullName evidence="1">Large ribosomal subunit protein bL25</fullName>
    </recommendedName>
    <alternativeName>
        <fullName evidence="3">50S ribosomal protein L25</fullName>
    </alternativeName>
    <alternativeName>
        <fullName evidence="1">General stress protein CTC</fullName>
    </alternativeName>
</protein>
<evidence type="ECO:0000255" key="1">
    <source>
        <dbReference type="HAMAP-Rule" id="MF_01334"/>
    </source>
</evidence>
<evidence type="ECO:0000256" key="2">
    <source>
        <dbReference type="SAM" id="MobiDB-lite"/>
    </source>
</evidence>
<evidence type="ECO:0000305" key="3"/>
<organism>
    <name type="scientific">Rhodospirillum rubrum (strain ATCC 11170 / ATH 1.1.1 / DSM 467 / LMG 4362 / NCIMB 8255 / S1)</name>
    <dbReference type="NCBI Taxonomy" id="269796"/>
    <lineage>
        <taxon>Bacteria</taxon>
        <taxon>Pseudomonadati</taxon>
        <taxon>Pseudomonadota</taxon>
        <taxon>Alphaproteobacteria</taxon>
        <taxon>Rhodospirillales</taxon>
        <taxon>Rhodospirillaceae</taxon>
        <taxon>Rhodospirillum</taxon>
    </lineage>
</organism>
<gene>
    <name evidence="1" type="primary">rplY</name>
    <name evidence="1" type="synonym">ctc</name>
    <name type="ordered locus">Rru_A3746</name>
</gene>
<feature type="chain" id="PRO_0000244238" description="Large ribosomal subunit protein bL25">
    <location>
        <begin position="1"/>
        <end position="210"/>
    </location>
</feature>
<feature type="region of interest" description="Disordered" evidence="2">
    <location>
        <begin position="1"/>
        <end position="23"/>
    </location>
</feature>